<keyword id="KW-0067">ATP-binding</keyword>
<keyword id="KW-1003">Cell membrane</keyword>
<keyword id="KW-0472">Membrane</keyword>
<keyword id="KW-0547">Nucleotide-binding</keyword>
<keyword id="KW-1185">Reference proteome</keyword>
<keyword id="KW-0677">Repeat</keyword>
<keyword id="KW-0812">Transmembrane</keyword>
<keyword id="KW-1133">Transmembrane helix</keyword>
<keyword id="KW-0813">Transport</keyword>
<sequence>MCCAVCGPEPGRIGEVTPLGPCPAQHRGGPLRPSELAQASVMAALCAVTAIISVVVPFAAGLALLGTVPTGLLAYRYRLRVLAAATVAAGMIAFLIAGLGGFMGVVHSAYIGGLTGIVKRRGRGTPTVVVSSLIGGFVFGAAMVGMLAAMVRLRHLIFKVMTANVDGIAATLARMHMQGAAADVKRYFAEGLQYWPWVLLGYFNIGIMIVSLIGWWALSRLLERMRGIPDVHKLDPPPGDDVDALIGPVPVRLDKVRFRYPRAGQDALREVSLDVRAGEHLAIIGANGSGKTTLMLILAGRAPTSGTVDRPGTVGLGKLGGTAVVLQHPESQVLGTRVADDVVWGLPLGTTADVGRLLSEVGLEALAERDTGSLSGGELQRLALAAALAREPAMLIADEVTTMVDQQGRDALLAVLSGLTQRHRTALVHITHYDNEADSADRTLSLSDSPDNTDMVHTAAMPAPVIGVDQPQHAPALELVGVGHEYASGTPWAKTALRDINFVVEQGDGVLIHGGNGSGKSTLAWIMAGLTIPTTGACLLDGRPTHEQVGAVALSFQAARLQLMRSRVDLEVASAAGFSASEQDRVAAALTVVGLDPALGARRIDQLSGGQMRRVVLAGLLARAPRALILDEPLAGLDAASQRGLLRLLEDLRRARGLTVVVVSHDFAGMEELCPRTLHLRDGVLESAAASEAGGMS</sequence>
<organism>
    <name type="scientific">Mycobacterium tuberculosis (strain CDC 1551 / Oshkosh)</name>
    <dbReference type="NCBI Taxonomy" id="83331"/>
    <lineage>
        <taxon>Bacteria</taxon>
        <taxon>Bacillati</taxon>
        <taxon>Actinomycetota</taxon>
        <taxon>Actinomycetes</taxon>
        <taxon>Mycobacteriales</taxon>
        <taxon>Mycobacteriaceae</taxon>
        <taxon>Mycobacterium</taxon>
        <taxon>Mycobacterium tuberculosis complex</taxon>
    </lineage>
</organism>
<accession>P9WQI6</accession>
<accession>L0TAW1</accession>
<accession>P63399</accession>
<accession>P71886</accession>
<protein>
    <recommendedName>
        <fullName>Uncharacterized ABC transporter ATP-binding protein MT2388</fullName>
    </recommendedName>
</protein>
<name>Y2326_MYCTO</name>
<comment type="subcellular location">
    <subcellularLocation>
        <location evidence="3">Cell membrane</location>
        <topology evidence="3">Multi-pass membrane protein</topology>
    </subcellularLocation>
</comment>
<comment type="similarity">
    <text evidence="3">Belongs to the ABC transporter superfamily.</text>
</comment>
<evidence type="ECO:0000255" key="1"/>
<evidence type="ECO:0000255" key="2">
    <source>
        <dbReference type="PROSITE-ProRule" id="PRU00434"/>
    </source>
</evidence>
<evidence type="ECO:0000305" key="3"/>
<gene>
    <name type="ordered locus">MT2388</name>
</gene>
<dbReference type="EMBL" id="AE000516">
    <property type="protein sequence ID" value="AAK46680.1"/>
    <property type="molecule type" value="Genomic_DNA"/>
</dbReference>
<dbReference type="PIR" id="G70704">
    <property type="entry name" value="G70704"/>
</dbReference>
<dbReference type="SMR" id="P9WQI6"/>
<dbReference type="KEGG" id="mtc:MT2388"/>
<dbReference type="PATRIC" id="fig|83331.31.peg.2573"/>
<dbReference type="HOGENOM" id="CLU_000604_86_7_11"/>
<dbReference type="Proteomes" id="UP000001020">
    <property type="component" value="Chromosome"/>
</dbReference>
<dbReference type="GO" id="GO:0043190">
    <property type="term" value="C:ATP-binding cassette (ABC) transporter complex"/>
    <property type="evidence" value="ECO:0007669"/>
    <property type="project" value="TreeGrafter"/>
</dbReference>
<dbReference type="GO" id="GO:0005524">
    <property type="term" value="F:ATP binding"/>
    <property type="evidence" value="ECO:0007669"/>
    <property type="project" value="UniProtKB-KW"/>
</dbReference>
<dbReference type="GO" id="GO:0016887">
    <property type="term" value="F:ATP hydrolysis activity"/>
    <property type="evidence" value="ECO:0007669"/>
    <property type="project" value="InterPro"/>
</dbReference>
<dbReference type="GO" id="GO:0042626">
    <property type="term" value="F:ATPase-coupled transmembrane transporter activity"/>
    <property type="evidence" value="ECO:0007669"/>
    <property type="project" value="TreeGrafter"/>
</dbReference>
<dbReference type="CDD" id="cd03225">
    <property type="entry name" value="ABC_cobalt_CbiO_domain1"/>
    <property type="match status" value="2"/>
</dbReference>
<dbReference type="FunFam" id="3.40.50.300:FF:002423">
    <property type="entry name" value="Cobalt ABC transporter ATP-binding protein"/>
    <property type="match status" value="1"/>
</dbReference>
<dbReference type="Gene3D" id="3.40.50.300">
    <property type="entry name" value="P-loop containing nucleotide triphosphate hydrolases"/>
    <property type="match status" value="2"/>
</dbReference>
<dbReference type="InterPro" id="IPR003593">
    <property type="entry name" value="AAA+_ATPase"/>
</dbReference>
<dbReference type="InterPro" id="IPR003439">
    <property type="entry name" value="ABC_transporter-like_ATP-bd"/>
</dbReference>
<dbReference type="InterPro" id="IPR017871">
    <property type="entry name" value="ABC_transporter-like_CS"/>
</dbReference>
<dbReference type="InterPro" id="IPR015856">
    <property type="entry name" value="ABC_transpr_CbiO/EcfA_su"/>
</dbReference>
<dbReference type="InterPro" id="IPR050095">
    <property type="entry name" value="ECF_ABC_transporter_ATP-bd"/>
</dbReference>
<dbReference type="InterPro" id="IPR027417">
    <property type="entry name" value="P-loop_NTPase"/>
</dbReference>
<dbReference type="PANTHER" id="PTHR43553:SF24">
    <property type="entry name" value="ENERGY-COUPLING FACTOR TRANSPORTER ATP-BINDING PROTEIN ECFA1"/>
    <property type="match status" value="1"/>
</dbReference>
<dbReference type="PANTHER" id="PTHR43553">
    <property type="entry name" value="HEAVY METAL TRANSPORTER"/>
    <property type="match status" value="1"/>
</dbReference>
<dbReference type="Pfam" id="PF00005">
    <property type="entry name" value="ABC_tran"/>
    <property type="match status" value="2"/>
</dbReference>
<dbReference type="SMART" id="SM00382">
    <property type="entry name" value="AAA"/>
    <property type="match status" value="2"/>
</dbReference>
<dbReference type="SUPFAM" id="SSF52540">
    <property type="entry name" value="P-loop containing nucleoside triphosphate hydrolases"/>
    <property type="match status" value="2"/>
</dbReference>
<dbReference type="PROSITE" id="PS00211">
    <property type="entry name" value="ABC_TRANSPORTER_1"/>
    <property type="match status" value="2"/>
</dbReference>
<dbReference type="PROSITE" id="PS50893">
    <property type="entry name" value="ABC_TRANSPORTER_2"/>
    <property type="match status" value="2"/>
</dbReference>
<proteinExistence type="inferred from homology"/>
<feature type="chain" id="PRO_0000426769" description="Uncharacterized ABC transporter ATP-binding protein MT2388">
    <location>
        <begin position="1"/>
        <end position="697"/>
    </location>
</feature>
<feature type="transmembrane region" description="Helical" evidence="1">
    <location>
        <begin position="45"/>
        <end position="65"/>
    </location>
</feature>
<feature type="transmembrane region" description="Helical" evidence="1">
    <location>
        <begin position="86"/>
        <end position="106"/>
    </location>
</feature>
<feature type="transmembrane region" description="Helical" evidence="1">
    <location>
        <begin position="128"/>
        <end position="148"/>
    </location>
</feature>
<feature type="transmembrane region" description="Helical" evidence="1">
    <location>
        <begin position="198"/>
        <end position="218"/>
    </location>
</feature>
<feature type="transmembrane region" description="Helical" evidence="1">
    <location>
        <begin position="280"/>
        <end position="300"/>
    </location>
</feature>
<feature type="transmembrane region" description="Helical" evidence="1">
    <location>
        <begin position="522"/>
        <end position="542"/>
    </location>
</feature>
<feature type="domain" description="ABC transporter 1" evidence="2">
    <location>
        <begin position="251"/>
        <end position="473"/>
    </location>
</feature>
<feature type="domain" description="ABC transporter 2" evidence="2">
    <location>
        <begin position="477"/>
        <end position="696"/>
    </location>
</feature>
<feature type="binding site" evidence="2">
    <location>
        <begin position="285"/>
        <end position="292"/>
    </location>
    <ligand>
        <name>ATP</name>
        <dbReference type="ChEBI" id="CHEBI:30616"/>
        <label>1</label>
    </ligand>
</feature>
<feature type="binding site" evidence="2">
    <location>
        <begin position="514"/>
        <end position="521"/>
    </location>
    <ligand>
        <name>ATP</name>
        <dbReference type="ChEBI" id="CHEBI:30616"/>
        <label>2</label>
    </ligand>
</feature>
<reference key="1">
    <citation type="journal article" date="2002" name="J. Bacteriol.">
        <title>Whole-genome comparison of Mycobacterium tuberculosis clinical and laboratory strains.</title>
        <authorList>
            <person name="Fleischmann R.D."/>
            <person name="Alland D."/>
            <person name="Eisen J.A."/>
            <person name="Carpenter L."/>
            <person name="White O."/>
            <person name="Peterson J.D."/>
            <person name="DeBoy R.T."/>
            <person name="Dodson R.J."/>
            <person name="Gwinn M.L."/>
            <person name="Haft D.H."/>
            <person name="Hickey E.K."/>
            <person name="Kolonay J.F."/>
            <person name="Nelson W.C."/>
            <person name="Umayam L.A."/>
            <person name="Ermolaeva M.D."/>
            <person name="Salzberg S.L."/>
            <person name="Delcher A."/>
            <person name="Utterback T.R."/>
            <person name="Weidman J.F."/>
            <person name="Khouri H.M."/>
            <person name="Gill J."/>
            <person name="Mikula A."/>
            <person name="Bishai W."/>
            <person name="Jacobs W.R. Jr."/>
            <person name="Venter J.C."/>
            <person name="Fraser C.M."/>
        </authorList>
    </citation>
    <scope>NUCLEOTIDE SEQUENCE [LARGE SCALE GENOMIC DNA]</scope>
    <source>
        <strain>CDC 1551 / Oshkosh</strain>
    </source>
</reference>